<evidence type="ECO:0000255" key="1">
    <source>
        <dbReference type="HAMAP-Rule" id="MF_00624"/>
    </source>
</evidence>
<protein>
    <recommendedName>
        <fullName evidence="1">Glucose-1-phosphate adenylyltransferase</fullName>
        <ecNumber evidence="1">2.7.7.27</ecNumber>
    </recommendedName>
    <alternativeName>
        <fullName evidence="1">ADP-glucose pyrophosphorylase</fullName>
        <shortName evidence="1">ADPGlc PPase</shortName>
    </alternativeName>
    <alternativeName>
        <fullName evidence="1">ADP-glucose synthase</fullName>
    </alternativeName>
</protein>
<proteinExistence type="inferred from homology"/>
<comment type="function">
    <text evidence="1">Involved in the biosynthesis of ADP-glucose, a building block required for the elongation reactions to produce glycogen. Catalyzes the reaction between ATP and alpha-D-glucose 1-phosphate (G1P) to produce pyrophosphate and ADP-Glc.</text>
</comment>
<comment type="catalytic activity">
    <reaction evidence="1">
        <text>alpha-D-glucose 1-phosphate + ATP + H(+) = ADP-alpha-D-glucose + diphosphate</text>
        <dbReference type="Rhea" id="RHEA:12120"/>
        <dbReference type="ChEBI" id="CHEBI:15378"/>
        <dbReference type="ChEBI" id="CHEBI:30616"/>
        <dbReference type="ChEBI" id="CHEBI:33019"/>
        <dbReference type="ChEBI" id="CHEBI:57498"/>
        <dbReference type="ChEBI" id="CHEBI:58601"/>
        <dbReference type="EC" id="2.7.7.27"/>
    </reaction>
</comment>
<comment type="pathway">
    <text evidence="1">Glycan biosynthesis; glycogen biosynthesis.</text>
</comment>
<comment type="subunit">
    <text evidence="1">Homotetramer.</text>
</comment>
<comment type="similarity">
    <text evidence="1">Belongs to the bacterial/plant glucose-1-phosphate adenylyltransferase family.</text>
</comment>
<sequence>MQQHELSSSRFVSTLTKNTVALILAGGKGSRLRDLTNWTAKPAVPFGGKFRIIDFPLSNCINSGVRRIGVVTQYKAHTLIQHIQRGWGFLRGEFNEFVELLPAQQRIQEEWYKGTADAVFQNLDILRQTNIEFVLILAGDHVYKMDYGQMLAAHVRNKADMTVACINVPLKEASAFGVMGVDENDRVVDFEEKPAHPSSLPDDPDHALASMGIYVFNAAFLYEQLIRDADDPKSSHDFGHDIIPYLIKKYRVFAHRFTDSCVGAADGNYYWRDVGTVDAYWEANMELTKVVPELNLYDRQWPIWTYQEQLPPAKFVFDNEERRGQATDSLISGGCIVSGANVRNSVLFSDVRVNSYSSIEQSVILPKVDIGRHVTLRRVVVDSGARIPDGMEIGVNLELDRKRFHITEQGVVLVTPDMLGQNLHHIR</sequence>
<keyword id="KW-0067">ATP-binding</keyword>
<keyword id="KW-0119">Carbohydrate metabolism</keyword>
<keyword id="KW-0320">Glycogen biosynthesis</keyword>
<keyword id="KW-0321">Glycogen metabolism</keyword>
<keyword id="KW-0547">Nucleotide-binding</keyword>
<keyword id="KW-0548">Nucleotidyltransferase</keyword>
<keyword id="KW-1185">Reference proteome</keyword>
<keyword id="KW-0808">Transferase</keyword>
<organism>
    <name type="scientific">Methylobacillus flagellatus (strain ATCC 51484 / DSM 6875 / VKM B-1610 / KT)</name>
    <dbReference type="NCBI Taxonomy" id="265072"/>
    <lineage>
        <taxon>Bacteria</taxon>
        <taxon>Pseudomonadati</taxon>
        <taxon>Pseudomonadota</taxon>
        <taxon>Betaproteobacteria</taxon>
        <taxon>Nitrosomonadales</taxon>
        <taxon>Methylophilaceae</taxon>
        <taxon>Methylobacillus</taxon>
    </lineage>
</organism>
<feature type="chain" id="PRO_0000261879" description="Glucose-1-phosphate adenylyltransferase">
    <location>
        <begin position="1"/>
        <end position="427"/>
    </location>
</feature>
<feature type="binding site" evidence="1">
    <location>
        <position position="112"/>
    </location>
    <ligand>
        <name>alpha-D-glucose 1-phosphate</name>
        <dbReference type="ChEBI" id="CHEBI:58601"/>
    </ligand>
</feature>
<feature type="binding site" evidence="1">
    <location>
        <position position="177"/>
    </location>
    <ligand>
        <name>alpha-D-glucose 1-phosphate</name>
        <dbReference type="ChEBI" id="CHEBI:58601"/>
    </ligand>
</feature>
<feature type="binding site" evidence="1">
    <location>
        <begin position="192"/>
        <end position="193"/>
    </location>
    <ligand>
        <name>alpha-D-glucose 1-phosphate</name>
        <dbReference type="ChEBI" id="CHEBI:58601"/>
    </ligand>
</feature>
<feature type="binding site" evidence="1">
    <location>
        <position position="210"/>
    </location>
    <ligand>
        <name>alpha-D-glucose 1-phosphate</name>
        <dbReference type="ChEBI" id="CHEBI:58601"/>
    </ligand>
</feature>
<gene>
    <name evidence="1" type="primary">glgC</name>
    <name type="ordered locus">Mfla_1368</name>
</gene>
<reference key="1">
    <citation type="submission" date="2006-03" db="EMBL/GenBank/DDBJ databases">
        <title>Complete sequence of Methylobacillus flagellatus KT.</title>
        <authorList>
            <consortium name="US DOE Joint Genome Institute"/>
            <person name="Copeland A."/>
            <person name="Lucas S."/>
            <person name="Lapidus A."/>
            <person name="Barry K."/>
            <person name="Detter J.C."/>
            <person name="Glavina del Rio T."/>
            <person name="Hammon N."/>
            <person name="Israni S."/>
            <person name="Dalin E."/>
            <person name="Tice H."/>
            <person name="Pitluck S."/>
            <person name="Brettin T."/>
            <person name="Bruce D."/>
            <person name="Han C."/>
            <person name="Tapia R."/>
            <person name="Saunders E."/>
            <person name="Gilna P."/>
            <person name="Schmutz J."/>
            <person name="Larimer F."/>
            <person name="Land M."/>
            <person name="Kyrpides N."/>
            <person name="Anderson I."/>
            <person name="Richardson P."/>
        </authorList>
    </citation>
    <scope>NUCLEOTIDE SEQUENCE [LARGE SCALE GENOMIC DNA]</scope>
    <source>
        <strain>ATCC 51484 / DSM 6875 / VKM B-1610 / KT</strain>
    </source>
</reference>
<dbReference type="EC" id="2.7.7.27" evidence="1"/>
<dbReference type="EMBL" id="CP000284">
    <property type="protein sequence ID" value="ABE49636.1"/>
    <property type="molecule type" value="Genomic_DNA"/>
</dbReference>
<dbReference type="RefSeq" id="WP_011479590.1">
    <property type="nucleotide sequence ID" value="NC_007947.1"/>
</dbReference>
<dbReference type="SMR" id="Q1H1K1"/>
<dbReference type="STRING" id="265072.Mfla_1368"/>
<dbReference type="KEGG" id="mfa:Mfla_1368"/>
<dbReference type="eggNOG" id="COG0448">
    <property type="taxonomic scope" value="Bacteria"/>
</dbReference>
<dbReference type="HOGENOM" id="CLU_029499_14_1_4"/>
<dbReference type="OrthoDB" id="9801810at2"/>
<dbReference type="UniPathway" id="UPA00164"/>
<dbReference type="Proteomes" id="UP000002440">
    <property type="component" value="Chromosome"/>
</dbReference>
<dbReference type="GO" id="GO:0005524">
    <property type="term" value="F:ATP binding"/>
    <property type="evidence" value="ECO:0007669"/>
    <property type="project" value="UniProtKB-KW"/>
</dbReference>
<dbReference type="GO" id="GO:0008878">
    <property type="term" value="F:glucose-1-phosphate adenylyltransferase activity"/>
    <property type="evidence" value="ECO:0007669"/>
    <property type="project" value="UniProtKB-UniRule"/>
</dbReference>
<dbReference type="GO" id="GO:0005978">
    <property type="term" value="P:glycogen biosynthetic process"/>
    <property type="evidence" value="ECO:0007669"/>
    <property type="project" value="UniProtKB-UniRule"/>
</dbReference>
<dbReference type="CDD" id="cd02508">
    <property type="entry name" value="ADP_Glucose_PP"/>
    <property type="match status" value="1"/>
</dbReference>
<dbReference type="CDD" id="cd04651">
    <property type="entry name" value="LbH_G1P_AT_C"/>
    <property type="match status" value="1"/>
</dbReference>
<dbReference type="Gene3D" id="2.160.10.10">
    <property type="entry name" value="Hexapeptide repeat proteins"/>
    <property type="match status" value="1"/>
</dbReference>
<dbReference type="Gene3D" id="3.90.550.10">
    <property type="entry name" value="Spore Coat Polysaccharide Biosynthesis Protein SpsA, Chain A"/>
    <property type="match status" value="1"/>
</dbReference>
<dbReference type="HAMAP" id="MF_00624">
    <property type="entry name" value="GlgC"/>
    <property type="match status" value="1"/>
</dbReference>
<dbReference type="InterPro" id="IPR011831">
    <property type="entry name" value="ADP-Glc_PPase"/>
</dbReference>
<dbReference type="InterPro" id="IPR005836">
    <property type="entry name" value="ADP_Glu_pyroP_CS"/>
</dbReference>
<dbReference type="InterPro" id="IPR023049">
    <property type="entry name" value="GlgC_bac"/>
</dbReference>
<dbReference type="InterPro" id="IPR056818">
    <property type="entry name" value="GlmU/GlgC-like_hexapep"/>
</dbReference>
<dbReference type="InterPro" id="IPR005835">
    <property type="entry name" value="NTP_transferase_dom"/>
</dbReference>
<dbReference type="InterPro" id="IPR029044">
    <property type="entry name" value="Nucleotide-diphossugar_trans"/>
</dbReference>
<dbReference type="InterPro" id="IPR011004">
    <property type="entry name" value="Trimer_LpxA-like_sf"/>
</dbReference>
<dbReference type="NCBIfam" id="TIGR02091">
    <property type="entry name" value="glgC"/>
    <property type="match status" value="1"/>
</dbReference>
<dbReference type="NCBIfam" id="NF001947">
    <property type="entry name" value="PRK00725.1"/>
    <property type="match status" value="1"/>
</dbReference>
<dbReference type="NCBIfam" id="NF002023">
    <property type="entry name" value="PRK00844.1"/>
    <property type="match status" value="1"/>
</dbReference>
<dbReference type="PANTHER" id="PTHR43523:SF2">
    <property type="entry name" value="GLUCOSE-1-PHOSPHATE ADENYLYLTRANSFERASE"/>
    <property type="match status" value="1"/>
</dbReference>
<dbReference type="PANTHER" id="PTHR43523">
    <property type="entry name" value="GLUCOSE-1-PHOSPHATE ADENYLYLTRANSFERASE-RELATED"/>
    <property type="match status" value="1"/>
</dbReference>
<dbReference type="Pfam" id="PF24894">
    <property type="entry name" value="Hexapep_GlmU"/>
    <property type="match status" value="1"/>
</dbReference>
<dbReference type="Pfam" id="PF00483">
    <property type="entry name" value="NTP_transferase"/>
    <property type="match status" value="1"/>
</dbReference>
<dbReference type="SUPFAM" id="SSF53448">
    <property type="entry name" value="Nucleotide-diphospho-sugar transferases"/>
    <property type="match status" value="1"/>
</dbReference>
<dbReference type="SUPFAM" id="SSF51161">
    <property type="entry name" value="Trimeric LpxA-like enzymes"/>
    <property type="match status" value="1"/>
</dbReference>
<dbReference type="PROSITE" id="PS00808">
    <property type="entry name" value="ADP_GLC_PYROPHOSPH_1"/>
    <property type="match status" value="1"/>
</dbReference>
<dbReference type="PROSITE" id="PS00809">
    <property type="entry name" value="ADP_GLC_PYROPHOSPH_2"/>
    <property type="match status" value="1"/>
</dbReference>
<accession>Q1H1K1</accession>
<name>GLGC_METFK</name>